<name>ATPD_BARHE</name>
<organism>
    <name type="scientific">Bartonella henselae (strain ATCC 49882 / DSM 28221 / CCUG 30454 / Houston 1)</name>
    <name type="common">Rochalimaea henselae</name>
    <dbReference type="NCBI Taxonomy" id="283166"/>
    <lineage>
        <taxon>Bacteria</taxon>
        <taxon>Pseudomonadati</taxon>
        <taxon>Pseudomonadota</taxon>
        <taxon>Alphaproteobacteria</taxon>
        <taxon>Hyphomicrobiales</taxon>
        <taxon>Bartonellaceae</taxon>
        <taxon>Bartonella</taxon>
    </lineage>
</organism>
<keyword id="KW-0066">ATP synthesis</keyword>
<keyword id="KW-0997">Cell inner membrane</keyword>
<keyword id="KW-1003">Cell membrane</keyword>
<keyword id="KW-0139">CF(1)</keyword>
<keyword id="KW-0375">Hydrogen ion transport</keyword>
<keyword id="KW-0406">Ion transport</keyword>
<keyword id="KW-0472">Membrane</keyword>
<keyword id="KW-0813">Transport</keyword>
<accession>Q6G1W6</accession>
<feature type="chain" id="PRO_0000370897" description="ATP synthase subunit delta">
    <location>
        <begin position="1"/>
        <end position="197"/>
    </location>
</feature>
<protein>
    <recommendedName>
        <fullName evidence="1">ATP synthase subunit delta</fullName>
    </recommendedName>
    <alternativeName>
        <fullName evidence="1">ATP synthase F(1) sector subunit delta</fullName>
    </alternativeName>
    <alternativeName>
        <fullName evidence="1">F-type ATPase subunit delta</fullName>
        <shortName evidence="1">F-ATPase subunit delta</shortName>
    </alternativeName>
</protein>
<comment type="function">
    <text evidence="1">F(1)F(0) ATP synthase produces ATP from ADP in the presence of a proton or sodium gradient. F-type ATPases consist of two structural domains, F(1) containing the extramembraneous catalytic core and F(0) containing the membrane proton channel, linked together by a central stalk and a peripheral stalk. During catalysis, ATP synthesis in the catalytic domain of F(1) is coupled via a rotary mechanism of the central stalk subunits to proton translocation.</text>
</comment>
<comment type="function">
    <text evidence="1">This protein is part of the stalk that links CF(0) to CF(1). It either transmits conformational changes from CF(0) to CF(1) or is implicated in proton conduction.</text>
</comment>
<comment type="subunit">
    <text evidence="1">F-type ATPases have 2 components, F(1) - the catalytic core - and F(0) - the membrane proton channel. F(1) has five subunits: alpha(3), beta(3), gamma(1), delta(1), epsilon(1). F(0) has three main subunits: a(1), b(2) and c(10-14). The alpha and beta chains form an alternating ring which encloses part of the gamma chain. F(1) is attached to F(0) by a central stalk formed by the gamma and epsilon chains, while a peripheral stalk is formed by the delta and b chains.</text>
</comment>
<comment type="subcellular location">
    <subcellularLocation>
        <location evidence="1">Cell inner membrane</location>
        <topology evidence="1">Peripheral membrane protein</topology>
    </subcellularLocation>
</comment>
<comment type="similarity">
    <text evidence="1">Belongs to the ATPase delta chain family.</text>
</comment>
<gene>
    <name evidence="1" type="primary">atpH</name>
    <name type="ordered locus">BH15350</name>
</gene>
<evidence type="ECO:0000255" key="1">
    <source>
        <dbReference type="HAMAP-Rule" id="MF_01416"/>
    </source>
</evidence>
<reference key="1">
    <citation type="journal article" date="2004" name="Proc. Natl. Acad. Sci. U.S.A.">
        <title>The louse-borne human pathogen Bartonella quintana is a genomic derivative of the zoonotic agent Bartonella henselae.</title>
        <authorList>
            <person name="Alsmark U.C.M."/>
            <person name="Frank A.C."/>
            <person name="Karlberg E.O."/>
            <person name="Legault B.-A."/>
            <person name="Ardell D.H."/>
            <person name="Canbaeck B."/>
            <person name="Eriksson A.-S."/>
            <person name="Naeslund A.K."/>
            <person name="Handley S.A."/>
            <person name="Huvet M."/>
            <person name="La Scola B."/>
            <person name="Holmberg M."/>
            <person name="Andersson S.G.E."/>
        </authorList>
    </citation>
    <scope>NUCLEOTIDE SEQUENCE [LARGE SCALE GENOMIC DNA]</scope>
    <source>
        <strain>ATCC 49882 / DSM 28221 / CCUG 30454 / Houston 1</strain>
    </source>
</reference>
<sequence>MSNSFSLIPLPLVDQRYAQALFDLAQEEGLVEILEKAVESFLMVLDQDEDLKHFVQSPFFSVKEQVKVMHSVCENIPFADEGAGQILSRFLRVITLNHRLRALSGILHAFQRRVALSRREFSAQIIAARPLNSQQEQQLQSVLESVVGGKVFLNICVDPEILGGLIIRLGSSQIDTSLMAKLSSLKIALKKRSADGY</sequence>
<proteinExistence type="inferred from homology"/>
<dbReference type="EMBL" id="BX897699">
    <property type="protein sequence ID" value="CAF28298.1"/>
    <property type="molecule type" value="Genomic_DNA"/>
</dbReference>
<dbReference type="RefSeq" id="WP_011181301.1">
    <property type="nucleotide sequence ID" value="NZ_LRIJ02000001.1"/>
</dbReference>
<dbReference type="SMR" id="Q6G1W6"/>
<dbReference type="PaxDb" id="283166-BH15350"/>
<dbReference type="DNASU" id="2865396"/>
<dbReference type="EnsemblBacteria" id="CAF28298">
    <property type="protein sequence ID" value="CAF28298"/>
    <property type="gene ID" value="BH15350"/>
</dbReference>
<dbReference type="GeneID" id="92986153"/>
<dbReference type="KEGG" id="bhe:BH15350"/>
<dbReference type="eggNOG" id="COG0712">
    <property type="taxonomic scope" value="Bacteria"/>
</dbReference>
<dbReference type="OrthoDB" id="9796185at2"/>
<dbReference type="Proteomes" id="UP000000421">
    <property type="component" value="Chromosome"/>
</dbReference>
<dbReference type="GO" id="GO:0005886">
    <property type="term" value="C:plasma membrane"/>
    <property type="evidence" value="ECO:0007669"/>
    <property type="project" value="UniProtKB-SubCell"/>
</dbReference>
<dbReference type="GO" id="GO:0045259">
    <property type="term" value="C:proton-transporting ATP synthase complex"/>
    <property type="evidence" value="ECO:0007669"/>
    <property type="project" value="UniProtKB-KW"/>
</dbReference>
<dbReference type="GO" id="GO:0046933">
    <property type="term" value="F:proton-transporting ATP synthase activity, rotational mechanism"/>
    <property type="evidence" value="ECO:0007669"/>
    <property type="project" value="UniProtKB-UniRule"/>
</dbReference>
<dbReference type="Gene3D" id="1.10.520.20">
    <property type="entry name" value="N-terminal domain of the delta subunit of the F1F0-ATP synthase"/>
    <property type="match status" value="1"/>
</dbReference>
<dbReference type="HAMAP" id="MF_01416">
    <property type="entry name" value="ATP_synth_delta_bact"/>
    <property type="match status" value="1"/>
</dbReference>
<dbReference type="InterPro" id="IPR026015">
    <property type="entry name" value="ATP_synth_OSCP/delta_N_sf"/>
</dbReference>
<dbReference type="InterPro" id="IPR020781">
    <property type="entry name" value="ATPase_OSCP/d_CS"/>
</dbReference>
<dbReference type="InterPro" id="IPR000711">
    <property type="entry name" value="ATPase_OSCP/dsu"/>
</dbReference>
<dbReference type="NCBIfam" id="TIGR01145">
    <property type="entry name" value="ATP_synt_delta"/>
    <property type="match status" value="1"/>
</dbReference>
<dbReference type="PANTHER" id="PTHR11910">
    <property type="entry name" value="ATP SYNTHASE DELTA CHAIN"/>
    <property type="match status" value="1"/>
</dbReference>
<dbReference type="Pfam" id="PF00213">
    <property type="entry name" value="OSCP"/>
    <property type="match status" value="1"/>
</dbReference>
<dbReference type="PRINTS" id="PR00125">
    <property type="entry name" value="ATPASEDELTA"/>
</dbReference>
<dbReference type="SUPFAM" id="SSF47928">
    <property type="entry name" value="N-terminal domain of the delta subunit of the F1F0-ATP synthase"/>
    <property type="match status" value="1"/>
</dbReference>
<dbReference type="PROSITE" id="PS00389">
    <property type="entry name" value="ATPASE_DELTA"/>
    <property type="match status" value="1"/>
</dbReference>